<comment type="function">
    <text evidence="1">Catalyzes the reversible interconversion of serine and glycine with tetrahydrofolate (THF) serving as the one-carbon carrier. This reaction serves as the major source of one-carbon groups required for the biosynthesis of purines, thymidylate, methionine, and other important biomolecules. Also exhibits THF-independent aldolase activity toward beta-hydroxyamino acids, producing glycine and aldehydes, via a retro-aldol mechanism.</text>
</comment>
<comment type="catalytic activity">
    <reaction evidence="1">
        <text>(6R)-5,10-methylene-5,6,7,8-tetrahydrofolate + glycine + H2O = (6S)-5,6,7,8-tetrahydrofolate + L-serine</text>
        <dbReference type="Rhea" id="RHEA:15481"/>
        <dbReference type="ChEBI" id="CHEBI:15377"/>
        <dbReference type="ChEBI" id="CHEBI:15636"/>
        <dbReference type="ChEBI" id="CHEBI:33384"/>
        <dbReference type="ChEBI" id="CHEBI:57305"/>
        <dbReference type="ChEBI" id="CHEBI:57453"/>
        <dbReference type="EC" id="2.1.2.1"/>
    </reaction>
</comment>
<comment type="cofactor">
    <cofactor evidence="1">
        <name>pyridoxal 5'-phosphate</name>
        <dbReference type="ChEBI" id="CHEBI:597326"/>
    </cofactor>
</comment>
<comment type="pathway">
    <text evidence="1">One-carbon metabolism; tetrahydrofolate interconversion.</text>
</comment>
<comment type="pathway">
    <text evidence="1">Amino-acid biosynthesis; glycine biosynthesis; glycine from L-serine: step 1/1.</text>
</comment>
<comment type="subunit">
    <text evidence="1">Homodimer.</text>
</comment>
<comment type="subcellular location">
    <subcellularLocation>
        <location evidence="1">Cytoplasm</location>
    </subcellularLocation>
</comment>
<comment type="similarity">
    <text evidence="1">Belongs to the SHMT family.</text>
</comment>
<gene>
    <name evidence="1" type="primary">glyA</name>
    <name type="ordered locus">ABBFA_001136</name>
</gene>
<accession>B7GZR6</accession>
<dbReference type="EC" id="2.1.2.1" evidence="1"/>
<dbReference type="EMBL" id="CP001172">
    <property type="protein sequence ID" value="ACJ56065.1"/>
    <property type="molecule type" value="Genomic_DNA"/>
</dbReference>
<dbReference type="RefSeq" id="WP_000457893.1">
    <property type="nucleotide sequence ID" value="NZ_CP001172.1"/>
</dbReference>
<dbReference type="SMR" id="B7GZR6"/>
<dbReference type="GeneID" id="92894564"/>
<dbReference type="HOGENOM" id="CLU_022477_2_1_6"/>
<dbReference type="UniPathway" id="UPA00193"/>
<dbReference type="UniPathway" id="UPA00288">
    <property type="reaction ID" value="UER01023"/>
</dbReference>
<dbReference type="Proteomes" id="UP000006924">
    <property type="component" value="Chromosome"/>
</dbReference>
<dbReference type="GO" id="GO:0005829">
    <property type="term" value="C:cytosol"/>
    <property type="evidence" value="ECO:0007669"/>
    <property type="project" value="TreeGrafter"/>
</dbReference>
<dbReference type="GO" id="GO:0004372">
    <property type="term" value="F:glycine hydroxymethyltransferase activity"/>
    <property type="evidence" value="ECO:0007669"/>
    <property type="project" value="UniProtKB-UniRule"/>
</dbReference>
<dbReference type="GO" id="GO:0030170">
    <property type="term" value="F:pyridoxal phosphate binding"/>
    <property type="evidence" value="ECO:0007669"/>
    <property type="project" value="UniProtKB-UniRule"/>
</dbReference>
<dbReference type="GO" id="GO:0019264">
    <property type="term" value="P:glycine biosynthetic process from serine"/>
    <property type="evidence" value="ECO:0007669"/>
    <property type="project" value="UniProtKB-UniRule"/>
</dbReference>
<dbReference type="GO" id="GO:0035999">
    <property type="term" value="P:tetrahydrofolate interconversion"/>
    <property type="evidence" value="ECO:0007669"/>
    <property type="project" value="UniProtKB-UniRule"/>
</dbReference>
<dbReference type="CDD" id="cd00378">
    <property type="entry name" value="SHMT"/>
    <property type="match status" value="1"/>
</dbReference>
<dbReference type="FunFam" id="3.40.640.10:FF:000001">
    <property type="entry name" value="Serine hydroxymethyltransferase"/>
    <property type="match status" value="1"/>
</dbReference>
<dbReference type="FunFam" id="3.90.1150.10:FF:000003">
    <property type="entry name" value="Serine hydroxymethyltransferase"/>
    <property type="match status" value="1"/>
</dbReference>
<dbReference type="Gene3D" id="3.90.1150.10">
    <property type="entry name" value="Aspartate Aminotransferase, domain 1"/>
    <property type="match status" value="1"/>
</dbReference>
<dbReference type="Gene3D" id="3.40.640.10">
    <property type="entry name" value="Type I PLP-dependent aspartate aminotransferase-like (Major domain)"/>
    <property type="match status" value="1"/>
</dbReference>
<dbReference type="HAMAP" id="MF_00051">
    <property type="entry name" value="SHMT"/>
    <property type="match status" value="1"/>
</dbReference>
<dbReference type="InterPro" id="IPR015424">
    <property type="entry name" value="PyrdxlP-dep_Trfase"/>
</dbReference>
<dbReference type="InterPro" id="IPR015421">
    <property type="entry name" value="PyrdxlP-dep_Trfase_major"/>
</dbReference>
<dbReference type="InterPro" id="IPR015422">
    <property type="entry name" value="PyrdxlP-dep_Trfase_small"/>
</dbReference>
<dbReference type="InterPro" id="IPR001085">
    <property type="entry name" value="Ser_HO-MeTrfase"/>
</dbReference>
<dbReference type="InterPro" id="IPR049943">
    <property type="entry name" value="Ser_HO-MeTrfase-like"/>
</dbReference>
<dbReference type="InterPro" id="IPR019798">
    <property type="entry name" value="Ser_HO-MeTrfase_PLP_BS"/>
</dbReference>
<dbReference type="InterPro" id="IPR039429">
    <property type="entry name" value="SHMT-like_dom"/>
</dbReference>
<dbReference type="NCBIfam" id="NF000586">
    <property type="entry name" value="PRK00011.1"/>
    <property type="match status" value="1"/>
</dbReference>
<dbReference type="PANTHER" id="PTHR11680">
    <property type="entry name" value="SERINE HYDROXYMETHYLTRANSFERASE"/>
    <property type="match status" value="1"/>
</dbReference>
<dbReference type="PANTHER" id="PTHR11680:SF50">
    <property type="entry name" value="SERINE HYDROXYMETHYLTRANSFERASE"/>
    <property type="match status" value="1"/>
</dbReference>
<dbReference type="Pfam" id="PF00464">
    <property type="entry name" value="SHMT"/>
    <property type="match status" value="1"/>
</dbReference>
<dbReference type="PIRSF" id="PIRSF000412">
    <property type="entry name" value="SHMT"/>
    <property type="match status" value="1"/>
</dbReference>
<dbReference type="SUPFAM" id="SSF53383">
    <property type="entry name" value="PLP-dependent transferases"/>
    <property type="match status" value="1"/>
</dbReference>
<dbReference type="PROSITE" id="PS00096">
    <property type="entry name" value="SHMT"/>
    <property type="match status" value="1"/>
</dbReference>
<protein>
    <recommendedName>
        <fullName evidence="1">Serine hydroxymethyltransferase</fullName>
        <shortName evidence="1">SHMT</shortName>
        <shortName evidence="1">Serine methylase</shortName>
        <ecNumber evidence="1">2.1.2.1</ecNumber>
    </recommendedName>
</protein>
<reference key="1">
    <citation type="journal article" date="2008" name="J. Bacteriol.">
        <title>Comparative genome sequence analysis of multidrug-resistant Acinetobacter baumannii.</title>
        <authorList>
            <person name="Adams M.D."/>
            <person name="Goglin K."/>
            <person name="Molyneaux N."/>
            <person name="Hujer K.M."/>
            <person name="Lavender H."/>
            <person name="Jamison J.J."/>
            <person name="MacDonald I.J."/>
            <person name="Martin K.M."/>
            <person name="Russo T."/>
            <person name="Campagnari A.A."/>
            <person name="Hujer A.M."/>
            <person name="Bonomo R.A."/>
            <person name="Gill S.R."/>
        </authorList>
    </citation>
    <scope>NUCLEOTIDE SEQUENCE [LARGE SCALE GENOMIC DNA]</scope>
    <source>
        <strain>AB307-0294</strain>
    </source>
</reference>
<name>GLYA_ACIB3</name>
<organism>
    <name type="scientific">Acinetobacter baumannii (strain AB307-0294)</name>
    <dbReference type="NCBI Taxonomy" id="557600"/>
    <lineage>
        <taxon>Bacteria</taxon>
        <taxon>Pseudomonadati</taxon>
        <taxon>Pseudomonadota</taxon>
        <taxon>Gammaproteobacteria</taxon>
        <taxon>Moraxellales</taxon>
        <taxon>Moraxellaceae</taxon>
        <taxon>Acinetobacter</taxon>
        <taxon>Acinetobacter calcoaceticus/baumannii complex</taxon>
    </lineage>
</organism>
<proteinExistence type="inferred from homology"/>
<feature type="chain" id="PRO_1000116816" description="Serine hydroxymethyltransferase">
    <location>
        <begin position="1"/>
        <end position="417"/>
    </location>
</feature>
<feature type="binding site" evidence="1">
    <location>
        <position position="120"/>
    </location>
    <ligand>
        <name>(6S)-5,6,7,8-tetrahydrofolate</name>
        <dbReference type="ChEBI" id="CHEBI:57453"/>
    </ligand>
</feature>
<feature type="binding site" evidence="1">
    <location>
        <begin position="124"/>
        <end position="126"/>
    </location>
    <ligand>
        <name>(6S)-5,6,7,8-tetrahydrofolate</name>
        <dbReference type="ChEBI" id="CHEBI:57453"/>
    </ligand>
</feature>
<feature type="binding site" evidence="1">
    <location>
        <begin position="354"/>
        <end position="356"/>
    </location>
    <ligand>
        <name>(6S)-5,6,7,8-tetrahydrofolate</name>
        <dbReference type="ChEBI" id="CHEBI:57453"/>
    </ligand>
</feature>
<feature type="site" description="Plays an important role in substrate specificity" evidence="1">
    <location>
        <position position="228"/>
    </location>
</feature>
<feature type="modified residue" description="N6-(pyridoxal phosphate)lysine" evidence="1">
    <location>
        <position position="229"/>
    </location>
</feature>
<keyword id="KW-0028">Amino-acid biosynthesis</keyword>
<keyword id="KW-0963">Cytoplasm</keyword>
<keyword id="KW-0554">One-carbon metabolism</keyword>
<keyword id="KW-0663">Pyridoxal phosphate</keyword>
<keyword id="KW-0808">Transferase</keyword>
<evidence type="ECO:0000255" key="1">
    <source>
        <dbReference type="HAMAP-Rule" id="MF_00051"/>
    </source>
</evidence>
<sequence>MFANISISEFDPELAQAIASEDERQEAHIELIASENYCSPAVMEAQGSKLTNKYAEGYPGKRYYGGCEFVDVIEQMAIDRAKELFGADYANVQPHAGSQANSAVYLALLNPGDTVLGMSLAHGGHLTHGAKVSFSGKTYNAVQYGLNAETGEIDYEEVERLALEHKPRMIVAGFSAYSRVVDWQRFRDIADKVGAYLFVDMAHVAGLVAAGVYPNPVQIADVTTTTTHKTLRGPRSGLILAKANEEIEKKLQSAVFPGNQGGPLMHAIAAKAICFKEAMSDDFKAYQQQVVKNAQAMAEVFIARGYDVVSGGTDNHLFLLSLIKQDVTGKDADAWLGAAHITVNKNSVPNDPRSPFVTSGIRIGTPAVTTRGFGEAEVRELAGWIADVIDSKGDEKVIADVKAKVEAVCAKFPVYAK</sequence>